<comment type="function">
    <text evidence="2 3">Required for both formation and activity of the chloroplast NAD(P)H dehydrogenase (NDH) complex of the photosynthetic electron transport chain. May function in assembly or stabilization of the NDH complex (PubMed:16359395, PubMed:20444231). Required for the accumulation of NDH subcomplex A, which is a core part of NDH. May be involved in post-translational steps during the biogenesis of subcomplex A (PubMed:20444231).</text>
</comment>
<comment type="subcellular location">
    <subcellularLocation>
        <location evidence="3">Plastid</location>
        <location evidence="3">Chloroplast stroma</location>
    </subcellularLocation>
    <text evidence="2">Previously localized in chloroplast thylakoid membrane fraction.</text>
</comment>
<comment type="disruption phenotype">
    <text evidence="2 3">Impaired chloroplastic NAD(P)H dehydrogenase (NDH) activity, probably due to a reduced stability of the NDH complex.</text>
</comment>
<proteinExistence type="evidence at transcript level"/>
<organism>
    <name type="scientific">Arabidopsis thaliana</name>
    <name type="common">Mouse-ear cress</name>
    <dbReference type="NCBI Taxonomy" id="3702"/>
    <lineage>
        <taxon>Eukaryota</taxon>
        <taxon>Viridiplantae</taxon>
        <taxon>Streptophyta</taxon>
        <taxon>Embryophyta</taxon>
        <taxon>Tracheophyta</taxon>
        <taxon>Spermatophyta</taxon>
        <taxon>Magnoliopsida</taxon>
        <taxon>eudicotyledons</taxon>
        <taxon>Gunneridae</taxon>
        <taxon>Pentapetalae</taxon>
        <taxon>rosids</taxon>
        <taxon>malvids</taxon>
        <taxon>Brassicales</taxon>
        <taxon>Brassicaceae</taxon>
        <taxon>Camelineae</taxon>
        <taxon>Arabidopsis</taxon>
    </lineage>
</organism>
<accession>Q9FL87</accession>
<accession>Q8LDX8</accession>
<sequence length="156" mass="17967">MECSLQKQLFNNGDKLFSSRHNRRVSIEQVHVTDSLSVNSINLFHKPICYPISSIITSRKSKSHFSVCATRRRRVHSNSDTYVLLEAGQDEQFVTEDELKAKLRGWLENWPVNSLPPDLARFDDLDEAVDFLVKAVCELEIDGEVGSVQWYQVRLE</sequence>
<evidence type="ECO:0000255" key="1"/>
<evidence type="ECO:0000269" key="2">
    <source>
    </source>
</evidence>
<evidence type="ECO:0000269" key="3">
    <source>
    </source>
</evidence>
<evidence type="ECO:0000303" key="4">
    <source>
    </source>
</evidence>
<evidence type="ECO:0000305" key="5"/>
<evidence type="ECO:0000312" key="6">
    <source>
        <dbReference type="Araport" id="AT5G39210"/>
    </source>
</evidence>
<evidence type="ECO:0000312" key="7">
    <source>
        <dbReference type="EMBL" id="BAB09375.1"/>
    </source>
</evidence>
<dbReference type="EMBL" id="AB010694">
    <property type="protein sequence ID" value="BAB09375.1"/>
    <property type="molecule type" value="Genomic_DNA"/>
</dbReference>
<dbReference type="EMBL" id="CP002688">
    <property type="protein sequence ID" value="AED94408.1"/>
    <property type="molecule type" value="Genomic_DNA"/>
</dbReference>
<dbReference type="EMBL" id="AY065367">
    <property type="protein sequence ID" value="AAL38808.1"/>
    <property type="molecule type" value="mRNA"/>
</dbReference>
<dbReference type="EMBL" id="AY114028">
    <property type="protein sequence ID" value="AAM45076.1"/>
    <property type="molecule type" value="mRNA"/>
</dbReference>
<dbReference type="EMBL" id="AY085734">
    <property type="protein sequence ID" value="AAM62952.1"/>
    <property type="molecule type" value="mRNA"/>
</dbReference>
<dbReference type="RefSeq" id="NP_568563.1">
    <property type="nucleotide sequence ID" value="NM_123283.5"/>
</dbReference>
<dbReference type="SMR" id="Q9FL87"/>
<dbReference type="FunCoup" id="Q9FL87">
    <property type="interactions" value="488"/>
</dbReference>
<dbReference type="STRING" id="3702.Q9FL87"/>
<dbReference type="PaxDb" id="3702-AT5G39210.1"/>
<dbReference type="ProteomicsDB" id="224545"/>
<dbReference type="EnsemblPlants" id="AT5G39210.1">
    <property type="protein sequence ID" value="AT5G39210.1"/>
    <property type="gene ID" value="AT5G39210"/>
</dbReference>
<dbReference type="GeneID" id="833917"/>
<dbReference type="Gramene" id="AT5G39210.1">
    <property type="protein sequence ID" value="AT5G39210.1"/>
    <property type="gene ID" value="AT5G39210"/>
</dbReference>
<dbReference type="KEGG" id="ath:AT5G39210"/>
<dbReference type="Araport" id="AT5G39210"/>
<dbReference type="TAIR" id="AT5G39210">
    <property type="gene designation" value="CRR7"/>
</dbReference>
<dbReference type="eggNOG" id="ENOG502S4HW">
    <property type="taxonomic scope" value="Eukaryota"/>
</dbReference>
<dbReference type="HOGENOM" id="CLU_135253_0_0_1"/>
<dbReference type="InParanoid" id="Q9FL87"/>
<dbReference type="OMA" id="LENWPVN"/>
<dbReference type="PhylomeDB" id="Q9FL87"/>
<dbReference type="PRO" id="PR:Q9FL87"/>
<dbReference type="Proteomes" id="UP000006548">
    <property type="component" value="Chromosome 5"/>
</dbReference>
<dbReference type="ExpressionAtlas" id="Q9FL87">
    <property type="expression patterns" value="baseline and differential"/>
</dbReference>
<dbReference type="GO" id="GO:0009507">
    <property type="term" value="C:chloroplast"/>
    <property type="evidence" value="ECO:0000314"/>
    <property type="project" value="TAIR"/>
</dbReference>
<dbReference type="GO" id="GO:0009570">
    <property type="term" value="C:chloroplast stroma"/>
    <property type="evidence" value="ECO:0000314"/>
    <property type="project" value="TAIR"/>
</dbReference>
<dbReference type="GO" id="GO:0016020">
    <property type="term" value="C:membrane"/>
    <property type="evidence" value="ECO:0000314"/>
    <property type="project" value="TAIR"/>
</dbReference>
<dbReference type="GO" id="GO:0010275">
    <property type="term" value="P:NAD(P)H dehydrogenase complex assembly"/>
    <property type="evidence" value="ECO:0000315"/>
    <property type="project" value="TAIR"/>
</dbReference>
<dbReference type="FunFam" id="3.90.940.40:FF:000001">
    <property type="entry name" value="Protein CHLORORESPIRATORY REDUCTION 7 chloroplastic"/>
    <property type="match status" value="1"/>
</dbReference>
<dbReference type="Gene3D" id="3.90.940.40">
    <property type="entry name" value="Protein CHLORORESPIRATORY REDUCTION 7"/>
    <property type="match status" value="1"/>
</dbReference>
<dbReference type="InterPro" id="IPR021954">
    <property type="entry name" value="CRR7"/>
</dbReference>
<dbReference type="InterPro" id="IPR038150">
    <property type="entry name" value="CRR7-like_sf"/>
</dbReference>
<dbReference type="PANTHER" id="PTHR36803">
    <property type="entry name" value="PROTEIN CHLORORESPIRATORY REDUCTION 7, CHLOROPLASTIC"/>
    <property type="match status" value="1"/>
</dbReference>
<dbReference type="PANTHER" id="PTHR36803:SF1">
    <property type="entry name" value="PROTEIN CHLORORESPIRATORY REDUCTION 7, CHLOROPLASTIC"/>
    <property type="match status" value="1"/>
</dbReference>
<dbReference type="Pfam" id="PF12095">
    <property type="entry name" value="CRR7"/>
    <property type="match status" value="1"/>
</dbReference>
<reference key="1">
    <citation type="journal article" date="1998" name="DNA Res.">
        <title>Structural analysis of Arabidopsis thaliana chromosome 5. V. Sequence features of the regions of 1,381,565 bp covered by twenty one physically assigned P1 and TAC clones.</title>
        <authorList>
            <person name="Kaneko T."/>
            <person name="Kotani H."/>
            <person name="Nakamura Y."/>
            <person name="Sato S."/>
            <person name="Asamizu E."/>
            <person name="Miyajima N."/>
            <person name="Tabata S."/>
        </authorList>
    </citation>
    <scope>NUCLEOTIDE SEQUENCE [LARGE SCALE GENOMIC DNA]</scope>
    <source>
        <strain>cv. Columbia</strain>
    </source>
</reference>
<reference key="2">
    <citation type="journal article" date="2017" name="Plant J.">
        <title>Araport11: a complete reannotation of the Arabidopsis thaliana reference genome.</title>
        <authorList>
            <person name="Cheng C.Y."/>
            <person name="Krishnakumar V."/>
            <person name="Chan A.P."/>
            <person name="Thibaud-Nissen F."/>
            <person name="Schobel S."/>
            <person name="Town C.D."/>
        </authorList>
    </citation>
    <scope>GENOME REANNOTATION</scope>
    <source>
        <strain>cv. Columbia</strain>
    </source>
</reference>
<reference key="3">
    <citation type="journal article" date="2003" name="Science">
        <title>Empirical analysis of transcriptional activity in the Arabidopsis genome.</title>
        <authorList>
            <person name="Yamada K."/>
            <person name="Lim J."/>
            <person name="Dale J.M."/>
            <person name="Chen H."/>
            <person name="Shinn P."/>
            <person name="Palm C.J."/>
            <person name="Southwick A.M."/>
            <person name="Wu H.C."/>
            <person name="Kim C.J."/>
            <person name="Nguyen M."/>
            <person name="Pham P.K."/>
            <person name="Cheuk R.F."/>
            <person name="Karlin-Newmann G."/>
            <person name="Liu S.X."/>
            <person name="Lam B."/>
            <person name="Sakano H."/>
            <person name="Wu T."/>
            <person name="Yu G."/>
            <person name="Miranda M."/>
            <person name="Quach H.L."/>
            <person name="Tripp M."/>
            <person name="Chang C.H."/>
            <person name="Lee J.M."/>
            <person name="Toriumi M.J."/>
            <person name="Chan M.M."/>
            <person name="Tang C.C."/>
            <person name="Onodera C.S."/>
            <person name="Deng J.M."/>
            <person name="Akiyama K."/>
            <person name="Ansari Y."/>
            <person name="Arakawa T."/>
            <person name="Banh J."/>
            <person name="Banno F."/>
            <person name="Bowser L."/>
            <person name="Brooks S.Y."/>
            <person name="Carninci P."/>
            <person name="Chao Q."/>
            <person name="Choy N."/>
            <person name="Enju A."/>
            <person name="Goldsmith A.D."/>
            <person name="Gurjal M."/>
            <person name="Hansen N.F."/>
            <person name="Hayashizaki Y."/>
            <person name="Johnson-Hopson C."/>
            <person name="Hsuan V.W."/>
            <person name="Iida K."/>
            <person name="Karnes M."/>
            <person name="Khan S."/>
            <person name="Koesema E."/>
            <person name="Ishida J."/>
            <person name="Jiang P.X."/>
            <person name="Jones T."/>
            <person name="Kawai J."/>
            <person name="Kamiya A."/>
            <person name="Meyers C."/>
            <person name="Nakajima M."/>
            <person name="Narusaka M."/>
            <person name="Seki M."/>
            <person name="Sakurai T."/>
            <person name="Satou M."/>
            <person name="Tamse R."/>
            <person name="Vaysberg M."/>
            <person name="Wallender E.K."/>
            <person name="Wong C."/>
            <person name="Yamamura Y."/>
            <person name="Yuan S."/>
            <person name="Shinozaki K."/>
            <person name="Davis R.W."/>
            <person name="Theologis A."/>
            <person name="Ecker J.R."/>
        </authorList>
    </citation>
    <scope>NUCLEOTIDE SEQUENCE [LARGE SCALE MRNA]</scope>
    <source>
        <strain>cv. Columbia</strain>
    </source>
</reference>
<reference key="4">
    <citation type="submission" date="2002-03" db="EMBL/GenBank/DDBJ databases">
        <title>Full-length cDNA from Arabidopsis thaliana.</title>
        <authorList>
            <person name="Brover V.V."/>
            <person name="Troukhan M.E."/>
            <person name="Alexandrov N.A."/>
            <person name="Lu Y.-P."/>
            <person name="Flavell R.B."/>
            <person name="Feldmann K.A."/>
        </authorList>
    </citation>
    <scope>NUCLEOTIDE SEQUENCE [LARGE SCALE MRNA]</scope>
</reference>
<reference key="5">
    <citation type="journal article" date="2005" name="Plant J.">
        <title>Identification of a novel protein, CRR7, required for the stabilization of the chloroplast NAD(P)H dehydrogenase complex in Arabidopsis.</title>
        <authorList>
            <person name="Kamruzzaman Munshi M."/>
            <person name="Kobayashi Y."/>
            <person name="Shikanai T."/>
        </authorList>
    </citation>
    <scope>FUNCTION</scope>
    <scope>SUBCELLULAR LOCATION</scope>
    <scope>DISRUPTION PHENOTYPE</scope>
</reference>
<reference key="6">
    <citation type="journal article" date="2010" name="Plant J.">
        <title>Chloroplast stromal proteins, CRR6 and CRR7, are required for assembly of the NAD(P)H dehydrogenase subcomplex A in Arabidopsis.</title>
        <authorList>
            <person name="Peng L."/>
            <person name="Cai W."/>
            <person name="Shikanai T."/>
        </authorList>
    </citation>
    <scope>FUNCTION</scope>
    <scope>SUBCELLULAR LOCATION</scope>
    <scope>DISRUPTION PHENOTYPE</scope>
</reference>
<name>CRR7_ARATH</name>
<feature type="transit peptide" description="Chloroplast" evidence="1">
    <location>
        <begin position="1"/>
        <end position="68"/>
    </location>
</feature>
<feature type="chain" id="PRO_0000433244" description="Protein CHLORORESPIRATORY REDUCTION 7, chloroplastic" evidence="1">
    <location>
        <begin position="69"/>
        <end position="156"/>
    </location>
</feature>
<feature type="sequence conflict" description="In Ref. 4; AAM62952." evidence="5" ref="4">
    <original>VHVTDSLSV</original>
    <variation>FHVIDSLPA</variation>
    <location>
        <begin position="30"/>
        <end position="38"/>
    </location>
</feature>
<feature type="sequence conflict" description="In Ref. 4; AAM62952." evidence="5" ref="4">
    <original>ICY</original>
    <variation>VCS</variation>
    <location>
        <begin position="48"/>
        <end position="50"/>
    </location>
</feature>
<feature type="sequence conflict" description="In Ref. 4; AAM62952." evidence="5" ref="4">
    <original>G</original>
    <variation>E</variation>
    <location>
        <position position="105"/>
    </location>
</feature>
<gene>
    <name evidence="4" type="primary">CRR7</name>
    <name evidence="6" type="ordered locus">At5g39210</name>
    <name evidence="7" type="ORF">K3K3.10</name>
</gene>
<keyword id="KW-0143">Chaperone</keyword>
<keyword id="KW-0150">Chloroplast</keyword>
<keyword id="KW-0934">Plastid</keyword>
<keyword id="KW-1185">Reference proteome</keyword>
<keyword id="KW-0809">Transit peptide</keyword>
<protein>
    <recommendedName>
        <fullName evidence="5">Protein CHLORORESPIRATORY REDUCTION 7, chloroplastic</fullName>
    </recommendedName>
</protein>